<sequence>MWFKNLTLYRFNKPFAVETEALETALADFTFSPCSSQDVSKFGFSNALGKKGCSLVHSADNRHLICVTKEEKILPGQVIKEALEEKVALIEDEENRKMAKKEKDALKDEIITSLLPRAFSRRSQTHALILPELEMILVDSSSATKAEELLALLRKALGSLPVIPLSFKAPVESNLTEWLKLGSAPLPFEMQDEAELKSEADEGGIVRFKQQDLKEDEVLAHLATGKQVHKLALHFGQSIALLLQSDASVKRLKFSEEFRAGNDEVGTDDPMARLDADFALMGSELVALMHALVAALGGLEDAQV</sequence>
<evidence type="ECO:0000255" key="1">
    <source>
        <dbReference type="HAMAP-Rule" id="MF_00194"/>
    </source>
</evidence>
<comment type="function">
    <text evidence="1">May be involved in recombination.</text>
</comment>
<comment type="subcellular location">
    <subcellularLocation>
        <location evidence="1">Cytoplasm</location>
        <location evidence="1">Nucleoid</location>
    </subcellularLocation>
</comment>
<comment type="similarity">
    <text evidence="1">Belongs to the RdgC family.</text>
</comment>
<proteinExistence type="inferred from homology"/>
<organism>
    <name type="scientific">Shewanella baltica (strain OS185)</name>
    <dbReference type="NCBI Taxonomy" id="402882"/>
    <lineage>
        <taxon>Bacteria</taxon>
        <taxon>Pseudomonadati</taxon>
        <taxon>Pseudomonadota</taxon>
        <taxon>Gammaproteobacteria</taxon>
        <taxon>Alteromonadales</taxon>
        <taxon>Shewanellaceae</taxon>
        <taxon>Shewanella</taxon>
    </lineage>
</organism>
<dbReference type="EMBL" id="CP000753">
    <property type="protein sequence ID" value="ABS07512.1"/>
    <property type="molecule type" value="Genomic_DNA"/>
</dbReference>
<dbReference type="RefSeq" id="WP_012088672.1">
    <property type="nucleotide sequence ID" value="NC_009665.1"/>
</dbReference>
<dbReference type="SMR" id="A6WL23"/>
<dbReference type="KEGG" id="sbm:Shew185_1362"/>
<dbReference type="HOGENOM" id="CLU_052038_1_1_6"/>
<dbReference type="GO" id="GO:0043590">
    <property type="term" value="C:bacterial nucleoid"/>
    <property type="evidence" value="ECO:0007669"/>
    <property type="project" value="TreeGrafter"/>
</dbReference>
<dbReference type="GO" id="GO:0005737">
    <property type="term" value="C:cytoplasm"/>
    <property type="evidence" value="ECO:0007669"/>
    <property type="project" value="UniProtKB-UniRule"/>
</dbReference>
<dbReference type="GO" id="GO:0003690">
    <property type="term" value="F:double-stranded DNA binding"/>
    <property type="evidence" value="ECO:0007669"/>
    <property type="project" value="TreeGrafter"/>
</dbReference>
<dbReference type="GO" id="GO:0006310">
    <property type="term" value="P:DNA recombination"/>
    <property type="evidence" value="ECO:0007669"/>
    <property type="project" value="UniProtKB-UniRule"/>
</dbReference>
<dbReference type="GO" id="GO:0000018">
    <property type="term" value="P:regulation of DNA recombination"/>
    <property type="evidence" value="ECO:0007669"/>
    <property type="project" value="TreeGrafter"/>
</dbReference>
<dbReference type="HAMAP" id="MF_00194">
    <property type="entry name" value="RdgC"/>
    <property type="match status" value="1"/>
</dbReference>
<dbReference type="InterPro" id="IPR007476">
    <property type="entry name" value="RdgC"/>
</dbReference>
<dbReference type="NCBIfam" id="NF001462">
    <property type="entry name" value="PRK00321.1-3"/>
    <property type="match status" value="1"/>
</dbReference>
<dbReference type="NCBIfam" id="NF001464">
    <property type="entry name" value="PRK00321.1-5"/>
    <property type="match status" value="1"/>
</dbReference>
<dbReference type="PANTHER" id="PTHR38103">
    <property type="entry name" value="RECOMBINATION-ASSOCIATED PROTEIN RDGC"/>
    <property type="match status" value="1"/>
</dbReference>
<dbReference type="PANTHER" id="PTHR38103:SF1">
    <property type="entry name" value="RECOMBINATION-ASSOCIATED PROTEIN RDGC"/>
    <property type="match status" value="1"/>
</dbReference>
<dbReference type="Pfam" id="PF04381">
    <property type="entry name" value="RdgC"/>
    <property type="match status" value="1"/>
</dbReference>
<gene>
    <name evidence="1" type="primary">rdgC</name>
    <name type="ordered locus">Shew185_1362</name>
</gene>
<accession>A6WL23</accession>
<feature type="chain" id="PRO_1000021229" description="Recombination-associated protein RdgC">
    <location>
        <begin position="1"/>
        <end position="304"/>
    </location>
</feature>
<name>RDGC_SHEB8</name>
<keyword id="KW-0963">Cytoplasm</keyword>
<keyword id="KW-0233">DNA recombination</keyword>
<protein>
    <recommendedName>
        <fullName evidence="1">Recombination-associated protein RdgC</fullName>
    </recommendedName>
</protein>
<reference key="1">
    <citation type="submission" date="2007-07" db="EMBL/GenBank/DDBJ databases">
        <title>Complete sequence of chromosome of Shewanella baltica OS185.</title>
        <authorList>
            <consortium name="US DOE Joint Genome Institute"/>
            <person name="Copeland A."/>
            <person name="Lucas S."/>
            <person name="Lapidus A."/>
            <person name="Barry K."/>
            <person name="Glavina del Rio T."/>
            <person name="Dalin E."/>
            <person name="Tice H."/>
            <person name="Pitluck S."/>
            <person name="Sims D."/>
            <person name="Brettin T."/>
            <person name="Bruce D."/>
            <person name="Detter J.C."/>
            <person name="Han C."/>
            <person name="Schmutz J."/>
            <person name="Larimer F."/>
            <person name="Land M."/>
            <person name="Hauser L."/>
            <person name="Kyrpides N."/>
            <person name="Mikhailova N."/>
            <person name="Brettar I."/>
            <person name="Rodrigues J."/>
            <person name="Konstantinidis K."/>
            <person name="Tiedje J."/>
            <person name="Richardson P."/>
        </authorList>
    </citation>
    <scope>NUCLEOTIDE SEQUENCE [LARGE SCALE GENOMIC DNA]</scope>
    <source>
        <strain>OS185</strain>
    </source>
</reference>